<reference key="1">
    <citation type="submission" date="1996-10" db="EMBL/GenBank/DDBJ databases">
        <title>Sulfolobus solfataricus citrate synthase.</title>
        <authorList>
            <person name="Connaris H."/>
            <person name="Danson M.J."/>
            <person name="Hough D.W."/>
        </authorList>
    </citation>
    <scope>NUCLEOTIDE SEQUENCE [GENOMIC DNA]</scope>
    <source>
        <strain>ATCC 35091 / DSM 1616 / IFO 15331 / JCM 8930 / P1</strain>
    </source>
</reference>
<reference key="2">
    <citation type="journal article" date="2001" name="Proc. Natl. Acad. Sci. U.S.A.">
        <title>The complete genome of the crenarchaeon Sulfolobus solfataricus P2.</title>
        <authorList>
            <person name="She Q."/>
            <person name="Singh R.K."/>
            <person name="Confalonieri F."/>
            <person name="Zivanovic Y."/>
            <person name="Allard G."/>
            <person name="Awayez M.J."/>
            <person name="Chan-Weiher C.C.-Y."/>
            <person name="Clausen I.G."/>
            <person name="Curtis B.A."/>
            <person name="De Moors A."/>
            <person name="Erauso G."/>
            <person name="Fletcher C."/>
            <person name="Gordon P.M.K."/>
            <person name="Heikamp-de Jong I."/>
            <person name="Jeffries A.C."/>
            <person name="Kozera C.J."/>
            <person name="Medina N."/>
            <person name="Peng X."/>
            <person name="Thi-Ngoc H.P."/>
            <person name="Redder P."/>
            <person name="Schenk M.E."/>
            <person name="Theriault C."/>
            <person name="Tolstrup N."/>
            <person name="Charlebois R.L."/>
            <person name="Doolittle W.F."/>
            <person name="Duguet M."/>
            <person name="Gaasterland T."/>
            <person name="Garrett R.A."/>
            <person name="Ragan M.A."/>
            <person name="Sensen C.W."/>
            <person name="Van der Oost J."/>
        </authorList>
    </citation>
    <scope>NUCLEOTIDE SEQUENCE [LARGE SCALE GENOMIC DNA]</scope>
    <source>
        <strain>ATCC 35092 / DSM 1617 / JCM 11322 / P2</strain>
    </source>
</reference>
<reference key="3">
    <citation type="journal article" date="1992" name="Eur. J. Biochem.">
        <title>Conversion, by limited proteolysis, of an archaebacterial citrate synthase into essentially a citryl-CoA hydrolase.</title>
        <authorList>
            <person name="Lill U."/>
            <person name="Lefrank S."/>
            <person name="Henschen A."/>
            <person name="Eggerer H."/>
        </authorList>
    </citation>
    <scope>PROTEIN SEQUENCE OF 7-30</scope>
    <scope>ACETYLATION</scope>
</reference>
<sequence length="377" mass="42752">MSVVSKGLENVIIKVTNLTFIDGEKGILRYRGYNIEDLVNYGSYEETIYLMLYGKLPTKKELNDLKAKLNEEYEVPQEVLDTIYLMPKEADAIGLLEVGTAALASIDKNFKWKENDKEKAISIIAKMATLVANVYRRKEGNKPRIPEPSDSFAKSFLLASFAREPTTDEINAMDKALILYTDHEVPASTTAALVAASTLSDMYSSLTAALAALKGPLHGGAAEEAFKQFIEIGDPNRVQNWFNDKVVNQKNRLMGFGHRVYKTYDPRAKIFKKLALTLIERNADARRYFEIAQKLEELGIKQFSSKGIYPNTDFYSGIVFYALGFPVYMFTALFALSRTLGWLAHIIEYVEEQHRLIRPRALYVGPEYQEYVSIDKR</sequence>
<accession>P80148</accession>
<accession>P77979</accession>
<feature type="chain" id="PRO_0000169977" description="Citrate synthase">
    <location>
        <begin position="1"/>
        <end position="377"/>
    </location>
</feature>
<feature type="active site" evidence="1">
    <location>
        <position position="258"/>
    </location>
</feature>
<feature type="active site" evidence="1">
    <location>
        <position position="313"/>
    </location>
</feature>
<feature type="sequence conflict" description="In Ref. 3; AA sequence." evidence="3" ref="3">
    <original>N</original>
    <variation>D</variation>
    <location>
        <position position="10"/>
    </location>
</feature>
<feature type="sequence conflict" description="In Ref. 3; AA sequence." evidence="3" ref="3">
    <original>I</original>
    <variation>Y</variation>
    <location>
        <position position="12"/>
    </location>
</feature>
<feature type="sequence conflict" description="In Ref. 3; AA sequence." evidence="3" ref="3">
    <original>V</original>
    <variation>S</variation>
    <location>
        <position position="15"/>
    </location>
</feature>
<feature type="sequence conflict" description="In Ref. 3; AA sequence." evidence="3" ref="3">
    <original>N</original>
    <variation>S</variation>
    <location>
        <position position="17"/>
    </location>
</feature>
<feature type="sequence conflict" description="In Ref. 3; AA sequence." evidence="3" ref="3">
    <original>F</original>
    <variation>Y</variation>
    <location>
        <position position="20"/>
    </location>
</feature>
<feature type="sequence conflict" description="In Ref. 3; AA sequence." evidence="3" ref="3">
    <original>EK</original>
    <variation>VN</variation>
    <location>
        <begin position="24"/>
        <end position="25"/>
    </location>
</feature>
<feature type="sequence conflict" description="In Ref. 3; AA sequence." evidence="3" ref="3">
    <original>I</original>
    <variation>V</variation>
    <location>
        <position position="27"/>
    </location>
</feature>
<feature type="sequence conflict" description="In Ref. 1; AAB09594." evidence="3" ref="1">
    <original>P</original>
    <variation>R</variation>
    <location>
        <position position="57"/>
    </location>
</feature>
<feature type="helix" evidence="4">
    <location>
        <begin position="6"/>
        <end position="8"/>
    </location>
</feature>
<feature type="strand" evidence="4">
    <location>
        <begin position="12"/>
        <end position="22"/>
    </location>
</feature>
<feature type="turn" evidence="4">
    <location>
        <begin position="23"/>
        <end position="26"/>
    </location>
</feature>
<feature type="strand" evidence="4">
    <location>
        <begin position="27"/>
        <end position="30"/>
    </location>
</feature>
<feature type="helix" evidence="4">
    <location>
        <begin position="35"/>
        <end position="41"/>
    </location>
</feature>
<feature type="helix" evidence="4">
    <location>
        <begin position="44"/>
        <end position="53"/>
    </location>
</feature>
<feature type="helix" evidence="4">
    <location>
        <begin position="59"/>
        <end position="70"/>
    </location>
</feature>
<feature type="helix" evidence="4">
    <location>
        <begin position="77"/>
        <end position="85"/>
    </location>
</feature>
<feature type="helix" evidence="4">
    <location>
        <begin position="92"/>
        <end position="106"/>
    </location>
</feature>
<feature type="strand" evidence="4">
    <location>
        <begin position="112"/>
        <end position="115"/>
    </location>
</feature>
<feature type="helix" evidence="4">
    <location>
        <begin position="116"/>
        <end position="138"/>
    </location>
</feature>
<feature type="helix" evidence="4">
    <location>
        <begin position="152"/>
        <end position="161"/>
    </location>
</feature>
<feature type="helix" evidence="4">
    <location>
        <begin position="167"/>
        <end position="180"/>
    </location>
</feature>
<feature type="helix" evidence="4">
    <location>
        <begin position="187"/>
        <end position="197"/>
    </location>
</feature>
<feature type="helix" evidence="4">
    <location>
        <begin position="202"/>
        <end position="213"/>
    </location>
</feature>
<feature type="turn" evidence="4">
    <location>
        <begin position="216"/>
        <end position="220"/>
    </location>
</feature>
<feature type="helix" evidence="4">
    <location>
        <begin position="221"/>
        <end position="232"/>
    </location>
</feature>
<feature type="helix" evidence="4">
    <location>
        <begin position="235"/>
        <end position="237"/>
    </location>
</feature>
<feature type="helix" evidence="4">
    <location>
        <begin position="238"/>
        <end position="245"/>
    </location>
</feature>
<feature type="turn" evidence="4">
    <location>
        <begin position="246"/>
        <end position="249"/>
    </location>
</feature>
<feature type="helix" evidence="4">
    <location>
        <begin position="266"/>
        <end position="279"/>
    </location>
</feature>
<feature type="helix" evidence="4">
    <location>
        <begin position="283"/>
        <end position="303"/>
    </location>
</feature>
<feature type="turn" evidence="4">
    <location>
        <begin position="304"/>
        <end position="307"/>
    </location>
</feature>
<feature type="turn" evidence="4">
    <location>
        <begin position="312"/>
        <end position="315"/>
    </location>
</feature>
<feature type="helix" evidence="4">
    <location>
        <begin position="316"/>
        <end position="323"/>
    </location>
</feature>
<feature type="helix" evidence="4">
    <location>
        <begin position="327"/>
        <end position="329"/>
    </location>
</feature>
<feature type="helix" evidence="4">
    <location>
        <begin position="330"/>
        <end position="352"/>
    </location>
</feature>
<feature type="strand" evidence="4">
    <location>
        <begin position="360"/>
        <end position="363"/>
    </location>
</feature>
<organism>
    <name type="scientific">Saccharolobus solfataricus (strain ATCC 35092 / DSM 1617 / JCM 11322 / P2)</name>
    <name type="common">Sulfolobus solfataricus</name>
    <dbReference type="NCBI Taxonomy" id="273057"/>
    <lineage>
        <taxon>Archaea</taxon>
        <taxon>Thermoproteota</taxon>
        <taxon>Thermoprotei</taxon>
        <taxon>Sulfolobales</taxon>
        <taxon>Sulfolobaceae</taxon>
        <taxon>Saccharolobus</taxon>
    </lineage>
</organism>
<proteinExistence type="evidence at protein level"/>
<comment type="catalytic activity">
    <reaction evidence="1">
        <text>oxaloacetate + acetyl-CoA + H2O = citrate + CoA + H(+)</text>
        <dbReference type="Rhea" id="RHEA:16845"/>
        <dbReference type="ChEBI" id="CHEBI:15377"/>
        <dbReference type="ChEBI" id="CHEBI:15378"/>
        <dbReference type="ChEBI" id="CHEBI:16452"/>
        <dbReference type="ChEBI" id="CHEBI:16947"/>
        <dbReference type="ChEBI" id="CHEBI:57287"/>
        <dbReference type="ChEBI" id="CHEBI:57288"/>
        <dbReference type="EC" id="2.3.3.16"/>
    </reaction>
</comment>
<comment type="activity regulation">
    <text>Allosterically inhibited by NADH.</text>
</comment>
<comment type="pathway">
    <text>Carbohydrate metabolism; tricarboxylic acid cycle; isocitrate from oxaloacetate: step 1/2.</text>
</comment>
<comment type="subunit">
    <text>Homodimer.</text>
</comment>
<comment type="PTM">
    <text evidence="2">The N-terminus is blocked by acetylation.</text>
</comment>
<comment type="miscellaneous">
    <text>Citrate synthase is found in nearly all cells capable of oxidative metabolism.</text>
</comment>
<comment type="similarity">
    <text evidence="3">Belongs to the citrate synthase family.</text>
</comment>
<name>CISY_SACS2</name>
<evidence type="ECO:0000255" key="1">
    <source>
        <dbReference type="PROSITE-ProRule" id="PRU10117"/>
    </source>
</evidence>
<evidence type="ECO:0000269" key="2">
    <source>
    </source>
</evidence>
<evidence type="ECO:0000305" key="3"/>
<evidence type="ECO:0007829" key="4">
    <source>
        <dbReference type="PDB" id="1O7X"/>
    </source>
</evidence>
<gene>
    <name type="primary">gltA</name>
    <name type="ordered locus">SSO2589</name>
</gene>
<keyword id="KW-0002">3D-structure</keyword>
<keyword id="KW-0007">Acetylation</keyword>
<keyword id="KW-0021">Allosteric enzyme</keyword>
<keyword id="KW-0903">Direct protein sequencing</keyword>
<keyword id="KW-1185">Reference proteome</keyword>
<keyword id="KW-0808">Transferase</keyword>
<keyword id="KW-0816">Tricarboxylic acid cycle</keyword>
<protein>
    <recommendedName>
        <fullName>Citrate synthase</fullName>
        <ecNumber>2.3.3.16</ecNumber>
    </recommendedName>
</protein>
<dbReference type="EC" id="2.3.3.16"/>
<dbReference type="EMBL" id="U70879">
    <property type="protein sequence ID" value="AAB09594.1"/>
    <property type="molecule type" value="Genomic_DNA"/>
</dbReference>
<dbReference type="EMBL" id="AE006641">
    <property type="protein sequence ID" value="AAK42713.1"/>
    <property type="molecule type" value="Genomic_DNA"/>
</dbReference>
<dbReference type="PIR" id="B90432">
    <property type="entry name" value="B90432"/>
</dbReference>
<dbReference type="RefSeq" id="WP_009989299.1">
    <property type="nucleotide sequence ID" value="NC_002754.1"/>
</dbReference>
<dbReference type="PDB" id="1O7X">
    <property type="method" value="X-ray"/>
    <property type="resolution" value="2.70 A"/>
    <property type="chains" value="A/B/C/D=1-377"/>
</dbReference>
<dbReference type="PDBsum" id="1O7X"/>
<dbReference type="SMR" id="P80148"/>
<dbReference type="FunCoup" id="P80148">
    <property type="interactions" value="303"/>
</dbReference>
<dbReference type="STRING" id="273057.SSO2589"/>
<dbReference type="PaxDb" id="273057-SSO2589"/>
<dbReference type="EnsemblBacteria" id="AAK42713">
    <property type="protein sequence ID" value="AAK42713"/>
    <property type="gene ID" value="SSO2589"/>
</dbReference>
<dbReference type="GeneID" id="44128319"/>
<dbReference type="KEGG" id="sso:SSO2589"/>
<dbReference type="PATRIC" id="fig|273057.12.peg.2670"/>
<dbReference type="eggNOG" id="arCOG04237">
    <property type="taxonomic scope" value="Archaea"/>
</dbReference>
<dbReference type="HOGENOM" id="CLU_025068_2_1_2"/>
<dbReference type="InParanoid" id="P80148"/>
<dbReference type="PhylomeDB" id="P80148"/>
<dbReference type="BRENDA" id="2.3.3.16">
    <property type="organism ID" value="6163"/>
</dbReference>
<dbReference type="UniPathway" id="UPA00223">
    <property type="reaction ID" value="UER00717"/>
</dbReference>
<dbReference type="EvolutionaryTrace" id="P80148"/>
<dbReference type="Proteomes" id="UP000001974">
    <property type="component" value="Chromosome"/>
</dbReference>
<dbReference type="GO" id="GO:0005737">
    <property type="term" value="C:cytoplasm"/>
    <property type="evidence" value="ECO:0007669"/>
    <property type="project" value="InterPro"/>
</dbReference>
<dbReference type="GO" id="GO:0004108">
    <property type="term" value="F:citrate (Si)-synthase activity"/>
    <property type="evidence" value="ECO:0000318"/>
    <property type="project" value="GO_Central"/>
</dbReference>
<dbReference type="GO" id="GO:0005975">
    <property type="term" value="P:carbohydrate metabolic process"/>
    <property type="evidence" value="ECO:0000318"/>
    <property type="project" value="GO_Central"/>
</dbReference>
<dbReference type="GO" id="GO:0006099">
    <property type="term" value="P:tricarboxylic acid cycle"/>
    <property type="evidence" value="ECO:0000318"/>
    <property type="project" value="GO_Central"/>
</dbReference>
<dbReference type="CDD" id="cd06118">
    <property type="entry name" value="citrate_synt_like_1"/>
    <property type="match status" value="1"/>
</dbReference>
<dbReference type="Gene3D" id="1.10.580.10">
    <property type="entry name" value="Citrate Synthase, domain 1"/>
    <property type="match status" value="1"/>
</dbReference>
<dbReference type="Gene3D" id="1.10.230.10">
    <property type="entry name" value="Cytochrome P450-Terp, domain 2"/>
    <property type="match status" value="1"/>
</dbReference>
<dbReference type="InterPro" id="IPR011278">
    <property type="entry name" value="2-MeCitrate/Citrate_synth_II"/>
</dbReference>
<dbReference type="InterPro" id="IPR054926">
    <property type="entry name" value="Cit_synThplmales"/>
</dbReference>
<dbReference type="InterPro" id="IPR016142">
    <property type="entry name" value="Citrate_synth-like_lrg_a-sub"/>
</dbReference>
<dbReference type="InterPro" id="IPR016143">
    <property type="entry name" value="Citrate_synth-like_sm_a-sub"/>
</dbReference>
<dbReference type="InterPro" id="IPR002020">
    <property type="entry name" value="Citrate_synthase"/>
</dbReference>
<dbReference type="InterPro" id="IPR019810">
    <property type="entry name" value="Citrate_synthase_AS"/>
</dbReference>
<dbReference type="InterPro" id="IPR024176">
    <property type="entry name" value="Citrate_synthase_bac-typ"/>
</dbReference>
<dbReference type="InterPro" id="IPR036969">
    <property type="entry name" value="Citrate_synthase_sf"/>
</dbReference>
<dbReference type="NCBIfam" id="TIGR01800">
    <property type="entry name" value="cit_synth_II"/>
    <property type="match status" value="1"/>
</dbReference>
<dbReference type="NCBIfam" id="NF041157">
    <property type="entry name" value="Cit_synThplmales"/>
    <property type="match status" value="1"/>
</dbReference>
<dbReference type="NCBIfam" id="NF010640">
    <property type="entry name" value="PRK14037.1"/>
    <property type="match status" value="1"/>
</dbReference>
<dbReference type="PANTHER" id="PTHR11739">
    <property type="entry name" value="CITRATE SYNTHASE"/>
    <property type="match status" value="1"/>
</dbReference>
<dbReference type="PANTHER" id="PTHR11739:SF4">
    <property type="entry name" value="CITRATE SYNTHASE, PEROXISOMAL"/>
    <property type="match status" value="1"/>
</dbReference>
<dbReference type="Pfam" id="PF00285">
    <property type="entry name" value="Citrate_synt"/>
    <property type="match status" value="1"/>
</dbReference>
<dbReference type="PIRSF" id="PIRSF001369">
    <property type="entry name" value="Citrate_synth"/>
    <property type="match status" value="1"/>
</dbReference>
<dbReference type="PRINTS" id="PR00143">
    <property type="entry name" value="CITRTSNTHASE"/>
</dbReference>
<dbReference type="SUPFAM" id="SSF48256">
    <property type="entry name" value="Citrate synthase"/>
    <property type="match status" value="1"/>
</dbReference>
<dbReference type="PROSITE" id="PS00480">
    <property type="entry name" value="CITRATE_SYNTHASE"/>
    <property type="match status" value="1"/>
</dbReference>